<evidence type="ECO:0000255" key="1">
    <source>
        <dbReference type="HAMAP-Rule" id="MF_03028"/>
    </source>
</evidence>
<evidence type="ECO:0000256" key="2">
    <source>
        <dbReference type="SAM" id="MobiDB-lite"/>
    </source>
</evidence>
<evidence type="ECO:0000269" key="3">
    <source>
    </source>
</evidence>
<evidence type="ECO:0000269" key="4">
    <source>
    </source>
</evidence>
<evidence type="ECO:0000269" key="5">
    <source>
    </source>
</evidence>
<evidence type="ECO:0000269" key="6">
    <source ref="3"/>
</evidence>
<evidence type="ECO:0000303" key="7">
    <source>
    </source>
</evidence>
<evidence type="ECO:0000312" key="8">
    <source>
        <dbReference type="Araport" id="AT5G14520"/>
    </source>
</evidence>
<evidence type="ECO:0000312" key="9">
    <source>
        <dbReference type="EMBL" id="CAB87619.1"/>
    </source>
</evidence>
<feature type="chain" id="PRO_0000437498" description="Pescadillo homolog">
    <location>
        <begin position="1"/>
        <end position="590"/>
    </location>
</feature>
<feature type="domain" description="BRCT" evidence="1">
    <location>
        <begin position="332"/>
        <end position="422"/>
    </location>
</feature>
<feature type="region of interest" description="Disordered" evidence="2">
    <location>
        <begin position="561"/>
        <end position="590"/>
    </location>
</feature>
<protein>
    <recommendedName>
        <fullName evidence="1">Pescadillo homolog</fullName>
        <shortName evidence="7">AtPES</shortName>
    </recommendedName>
</protein>
<gene>
    <name evidence="7" type="primary">PES</name>
    <name evidence="8" type="ordered locus">At5g14520</name>
    <name evidence="9" type="ORF">T15N1_10</name>
</gene>
<name>PESC_ARATH</name>
<dbReference type="EMBL" id="AL163792">
    <property type="protein sequence ID" value="CAB87619.1"/>
    <property type="molecule type" value="Genomic_DNA"/>
</dbReference>
<dbReference type="EMBL" id="CP002688">
    <property type="protein sequence ID" value="AED92043.1"/>
    <property type="molecule type" value="Genomic_DNA"/>
</dbReference>
<dbReference type="PIR" id="T48625">
    <property type="entry name" value="T48625"/>
</dbReference>
<dbReference type="RefSeq" id="NP_196956.1">
    <property type="nucleotide sequence ID" value="NM_121456.4"/>
</dbReference>
<dbReference type="SMR" id="Q9LYK7"/>
<dbReference type="FunCoup" id="Q9LYK7">
    <property type="interactions" value="4690"/>
</dbReference>
<dbReference type="STRING" id="3702.Q9LYK7"/>
<dbReference type="iPTMnet" id="Q9LYK7"/>
<dbReference type="PaxDb" id="3702-AT5G14520.1"/>
<dbReference type="ProteomicsDB" id="236418"/>
<dbReference type="EnsemblPlants" id="AT5G14520.1">
    <property type="protein sequence ID" value="AT5G14520.1"/>
    <property type="gene ID" value="AT5G14520"/>
</dbReference>
<dbReference type="GeneID" id="831303"/>
<dbReference type="Gramene" id="AT5G14520.1">
    <property type="protein sequence ID" value="AT5G14520.1"/>
    <property type="gene ID" value="AT5G14520"/>
</dbReference>
<dbReference type="KEGG" id="ath:AT5G14520"/>
<dbReference type="Araport" id="AT5G14520"/>
<dbReference type="TAIR" id="AT5G14520">
    <property type="gene designation" value="PES"/>
</dbReference>
<dbReference type="eggNOG" id="KOG2481">
    <property type="taxonomic scope" value="Eukaryota"/>
</dbReference>
<dbReference type="HOGENOM" id="CLU_019619_2_0_1"/>
<dbReference type="InParanoid" id="Q9LYK7"/>
<dbReference type="OMA" id="QKVTWIV"/>
<dbReference type="OrthoDB" id="10264910at2759"/>
<dbReference type="PhylomeDB" id="Q9LYK7"/>
<dbReference type="CD-CODE" id="4299E36E">
    <property type="entry name" value="Nucleolus"/>
</dbReference>
<dbReference type="PRO" id="PR:Q9LYK7"/>
<dbReference type="Proteomes" id="UP000006548">
    <property type="component" value="Chromosome 5"/>
</dbReference>
<dbReference type="ExpressionAtlas" id="Q9LYK7">
    <property type="expression patterns" value="baseline and differential"/>
</dbReference>
<dbReference type="GO" id="GO:0005730">
    <property type="term" value="C:nucleolus"/>
    <property type="evidence" value="ECO:0000314"/>
    <property type="project" value="TAIR"/>
</dbReference>
<dbReference type="GO" id="GO:0005654">
    <property type="term" value="C:nucleoplasm"/>
    <property type="evidence" value="ECO:0007669"/>
    <property type="project" value="UniProtKB-SubCell"/>
</dbReference>
<dbReference type="GO" id="GO:0030687">
    <property type="term" value="C:preribosome, large subunit precursor"/>
    <property type="evidence" value="ECO:0007669"/>
    <property type="project" value="UniProtKB-UniRule"/>
</dbReference>
<dbReference type="GO" id="GO:0003729">
    <property type="term" value="F:mRNA binding"/>
    <property type="evidence" value="ECO:0000314"/>
    <property type="project" value="TAIR"/>
</dbReference>
<dbReference type="GO" id="GO:0043021">
    <property type="term" value="F:ribonucleoprotein complex binding"/>
    <property type="evidence" value="ECO:0007669"/>
    <property type="project" value="UniProtKB-UniRule"/>
</dbReference>
<dbReference type="GO" id="GO:0000466">
    <property type="term" value="P:maturation of 5.8S rRNA from tricistronic rRNA transcript (SSU-rRNA, 5.8S rRNA, LSU-rRNA)"/>
    <property type="evidence" value="ECO:0007669"/>
    <property type="project" value="UniProtKB-UniRule"/>
</dbReference>
<dbReference type="GO" id="GO:0000463">
    <property type="term" value="P:maturation of LSU-rRNA from tricistronic rRNA transcript (SSU-rRNA, 5.8S rRNA, LSU-rRNA)"/>
    <property type="evidence" value="ECO:0007669"/>
    <property type="project" value="UniProtKB-UniRule"/>
</dbReference>
<dbReference type="GO" id="GO:0090069">
    <property type="term" value="P:regulation of ribosome biogenesis"/>
    <property type="evidence" value="ECO:0000250"/>
    <property type="project" value="TAIR"/>
</dbReference>
<dbReference type="GO" id="GO:2000232">
    <property type="term" value="P:regulation of rRNA processing"/>
    <property type="evidence" value="ECO:0000315"/>
    <property type="project" value="TAIR"/>
</dbReference>
<dbReference type="CDD" id="cd17709">
    <property type="entry name" value="BRCT_pescadillo_like"/>
    <property type="match status" value="1"/>
</dbReference>
<dbReference type="FunFam" id="3.40.50.10190:FF:000002">
    <property type="entry name" value="Pescadillo homolog"/>
    <property type="match status" value="1"/>
</dbReference>
<dbReference type="Gene3D" id="3.40.50.10190">
    <property type="entry name" value="BRCT domain"/>
    <property type="match status" value="1"/>
</dbReference>
<dbReference type="HAMAP" id="MF_03028">
    <property type="entry name" value="Pescadillo"/>
    <property type="match status" value="1"/>
</dbReference>
<dbReference type="InterPro" id="IPR001357">
    <property type="entry name" value="BRCT_dom"/>
</dbReference>
<dbReference type="InterPro" id="IPR036420">
    <property type="entry name" value="BRCT_dom_sf"/>
</dbReference>
<dbReference type="InterPro" id="IPR010613">
    <property type="entry name" value="PES"/>
</dbReference>
<dbReference type="PANTHER" id="PTHR12221">
    <property type="entry name" value="PESCADILLO - RELATED"/>
    <property type="match status" value="1"/>
</dbReference>
<dbReference type="PANTHER" id="PTHR12221:SF6">
    <property type="entry name" value="PESCADILLO HOMOLOG"/>
    <property type="match status" value="1"/>
</dbReference>
<dbReference type="Pfam" id="PF16589">
    <property type="entry name" value="BRCT_2"/>
    <property type="match status" value="1"/>
</dbReference>
<dbReference type="Pfam" id="PF06732">
    <property type="entry name" value="Pescadillo_N"/>
    <property type="match status" value="1"/>
</dbReference>
<dbReference type="SMART" id="SM00292">
    <property type="entry name" value="BRCT"/>
    <property type="match status" value="1"/>
</dbReference>
<dbReference type="SUPFAM" id="SSF52113">
    <property type="entry name" value="BRCT domain"/>
    <property type="match status" value="1"/>
</dbReference>
<dbReference type="PROSITE" id="PS50172">
    <property type="entry name" value="BRCT"/>
    <property type="match status" value="1"/>
</dbReference>
<proteinExistence type="evidence at protein level"/>
<sequence>MPKHYRPTGKKKEGNAARYMTRSQALKHLQVNLNLFRRLCIVKGIFPREPKKKIKGNHHTYYHVKDIAFLMHEPLLEKFREIKTYQKKVKKAKAKKNEELARLLLTRQPTYKLDRLIRERYPTFIDALRDLDDCLTMVHLFAVLPASDRENLEVKRVHNCRRLTHEWQAYISRSHALRKVFVSVKGIYYQAEIEGQKITWLTPHAIQQVFTNDVDFGVLLTFLEFYETLLAFINFKLYHSLNVKYPPILDSRLEALAADLYALSRYIDASSRGMAVEPKVDASFSSQSNDREESELRLAQLQHQLPSSEPGALMHLVADNNKEVEEDEETRVCKSLFKDLKFFLSREVPRESLQLVITAFGGMVSWEGEGAPFKEDDESITHHIIDKPSAGHLYLSRVYVQPQWIYDCVNARIILPTEKYLVGRIPPPHLSPFVDNEAEGYVPDYAETIKRLQAAARNEVLPLPGVGKEDLEDPQNLLYAGVMSRAEEAEAAKNKKKMAAQEKQYHEELKMEINGSKDVVAPVLAEGEGEESVPDAMQIAQEDADMPKVLMSRKKRKLYDAMKISQSRKRSGVEIIEQRKKRLNDTQPSS</sequence>
<comment type="function">
    <text evidence="1 3 4">Required for maturation of ribosomal RNAs and formation of the large ribosomal subunit (By similarity). Plays an essential role in cell growth and survival through its regulation of ribosome biogenesis and mitotic progression (PubMed:23909681). Required for normal root cell growth and differentiation (PubMed:25443833).</text>
</comment>
<comment type="subunit">
    <text evidence="3 4 5">Interacts with BOP1 and WDR12 (PubMed:23909681, PubMed:25443833). Interacts with NSN1 (PubMed:26163696).</text>
</comment>
<comment type="subcellular location">
    <subcellularLocation>
        <location evidence="1 3 4 5 6">Nucleus</location>
        <location evidence="1 3 4 5 6">Nucleolus</location>
    </subcellularLocation>
    <subcellularLocation>
        <location evidence="1">Nucleus</location>
        <location evidence="1">Nucleoplasm</location>
    </subcellularLocation>
    <text evidence="4">Localizes in the granular component (GC) region of the nucleolus.</text>
</comment>
<comment type="tissue specificity">
    <text evidence="6">Expressed in shoot and root apical meristems, epidermal cells and vasculature of developing leaves, trichome progenitor cells, young flowers, developing pollen grains and ovules, and mature pollen grains.</text>
</comment>
<comment type="miscellaneous">
    <text evidence="4">Plants silencing PES display severely compromised root meristem structures and a reduction of the primary root length of up to two-thirds.</text>
</comment>
<comment type="similarity">
    <text evidence="1">Belongs to the pescadillo family.</text>
</comment>
<reference key="1">
    <citation type="journal article" date="2000" name="Nature">
        <title>Sequence and analysis of chromosome 5 of the plant Arabidopsis thaliana.</title>
        <authorList>
            <person name="Tabata S."/>
            <person name="Kaneko T."/>
            <person name="Nakamura Y."/>
            <person name="Kotani H."/>
            <person name="Kato T."/>
            <person name="Asamizu E."/>
            <person name="Miyajima N."/>
            <person name="Sasamoto S."/>
            <person name="Kimura T."/>
            <person name="Hosouchi T."/>
            <person name="Kawashima K."/>
            <person name="Kohara M."/>
            <person name="Matsumoto M."/>
            <person name="Matsuno A."/>
            <person name="Muraki A."/>
            <person name="Nakayama S."/>
            <person name="Nakazaki N."/>
            <person name="Naruo K."/>
            <person name="Okumura S."/>
            <person name="Shinpo S."/>
            <person name="Takeuchi C."/>
            <person name="Wada T."/>
            <person name="Watanabe A."/>
            <person name="Yamada M."/>
            <person name="Yasuda M."/>
            <person name="Sato S."/>
            <person name="de la Bastide M."/>
            <person name="Huang E."/>
            <person name="Spiegel L."/>
            <person name="Gnoj L."/>
            <person name="O'Shaughnessy A."/>
            <person name="Preston R."/>
            <person name="Habermann K."/>
            <person name="Murray J."/>
            <person name="Johnson D."/>
            <person name="Rohlfing T."/>
            <person name="Nelson J."/>
            <person name="Stoneking T."/>
            <person name="Pepin K."/>
            <person name="Spieth J."/>
            <person name="Sekhon M."/>
            <person name="Armstrong J."/>
            <person name="Becker M."/>
            <person name="Belter E."/>
            <person name="Cordum H."/>
            <person name="Cordes M."/>
            <person name="Courtney L."/>
            <person name="Courtney W."/>
            <person name="Dante M."/>
            <person name="Du H."/>
            <person name="Edwards J."/>
            <person name="Fryman J."/>
            <person name="Haakensen B."/>
            <person name="Lamar E."/>
            <person name="Latreille P."/>
            <person name="Leonard S."/>
            <person name="Meyer R."/>
            <person name="Mulvaney E."/>
            <person name="Ozersky P."/>
            <person name="Riley A."/>
            <person name="Strowmatt C."/>
            <person name="Wagner-McPherson C."/>
            <person name="Wollam A."/>
            <person name="Yoakum M."/>
            <person name="Bell M."/>
            <person name="Dedhia N."/>
            <person name="Parnell L."/>
            <person name="Shah R."/>
            <person name="Rodriguez M."/>
            <person name="Hoon See L."/>
            <person name="Vil D."/>
            <person name="Baker J."/>
            <person name="Kirchoff K."/>
            <person name="Toth K."/>
            <person name="King L."/>
            <person name="Bahret A."/>
            <person name="Miller B."/>
            <person name="Marra M.A."/>
            <person name="Martienssen R."/>
            <person name="McCombie W.R."/>
            <person name="Wilson R.K."/>
            <person name="Murphy G."/>
            <person name="Bancroft I."/>
            <person name="Volckaert G."/>
            <person name="Wambutt R."/>
            <person name="Duesterhoeft A."/>
            <person name="Stiekema W."/>
            <person name="Pohl T."/>
            <person name="Entian K.-D."/>
            <person name="Terryn N."/>
            <person name="Hartley N."/>
            <person name="Bent E."/>
            <person name="Johnson S."/>
            <person name="Langham S.-A."/>
            <person name="McCullagh B."/>
            <person name="Robben J."/>
            <person name="Grymonprez B."/>
            <person name="Zimmermann W."/>
            <person name="Ramsperger U."/>
            <person name="Wedler H."/>
            <person name="Balke K."/>
            <person name="Wedler E."/>
            <person name="Peters S."/>
            <person name="van Staveren M."/>
            <person name="Dirkse W."/>
            <person name="Mooijman P."/>
            <person name="Klein Lankhorst R."/>
            <person name="Weitzenegger T."/>
            <person name="Bothe G."/>
            <person name="Rose M."/>
            <person name="Hauf J."/>
            <person name="Berneiser S."/>
            <person name="Hempel S."/>
            <person name="Feldpausch M."/>
            <person name="Lamberth S."/>
            <person name="Villarroel R."/>
            <person name="Gielen J."/>
            <person name="Ardiles W."/>
            <person name="Bents O."/>
            <person name="Lemcke K."/>
            <person name="Kolesov G."/>
            <person name="Mayer K.F.X."/>
            <person name="Rudd S."/>
            <person name="Schoof H."/>
            <person name="Schueller C."/>
            <person name="Zaccaria P."/>
            <person name="Mewes H.-W."/>
            <person name="Bevan M."/>
            <person name="Fransz P.F."/>
        </authorList>
    </citation>
    <scope>NUCLEOTIDE SEQUENCE [LARGE SCALE GENOMIC DNA]</scope>
    <source>
        <strain>cv. Columbia</strain>
    </source>
</reference>
<reference key="2">
    <citation type="journal article" date="2017" name="Plant J.">
        <title>Araport11: a complete reannotation of the Arabidopsis thaliana reference genome.</title>
        <authorList>
            <person name="Cheng C.Y."/>
            <person name="Krishnakumar V."/>
            <person name="Chan A.P."/>
            <person name="Thibaud-Nissen F."/>
            <person name="Schobel S."/>
            <person name="Town C.D."/>
        </authorList>
    </citation>
    <scope>GENOME REANNOTATION</scope>
    <source>
        <strain>cv. Columbia</strain>
    </source>
</reference>
<reference key="3">
    <citation type="journal article" date="2007" name="Plant Sci.">
        <title>Isolation and characterization of ZePES and AtPES, the pescadillo orthologs from Zinnia and Arabidopsis.</title>
        <authorList>
            <person name="Zografidis A."/>
            <person name="Kapolas G."/>
            <person name="Kitsios G."/>
            <person name="McCann M."/>
            <person name="Roberts K."/>
            <person name="Milioni D."/>
            <person name="Haralampidis K."/>
        </authorList>
    </citation>
    <scope>SUBCELLULAR LOCATION</scope>
    <scope>TISSUE SPECIFICITY</scope>
</reference>
<reference key="4">
    <citation type="journal article" date="2013" name="Plant J.">
        <title>Pescadillo plays an essential role in plant cell growth and survival by modulating ribosome biogenesis.</title>
        <authorList>
            <person name="Cho H.K."/>
            <person name="Ahn C.S."/>
            <person name="Lee H.S."/>
            <person name="Kim J.K."/>
            <person name="Pai H.S."/>
        </authorList>
    </citation>
    <scope>FUNCTION</scope>
    <scope>INTERACTION WITH BOP1 AND WDR12</scope>
    <scope>SUBCELLULAR LOCATION</scope>
</reference>
<reference key="5">
    <citation type="journal article" date="2014" name="Plant Sci.">
        <title>Transcriptional regulation and functional involvement of the Arabidopsis pescadillo ortholog AtPES in root development.</title>
        <authorList>
            <person name="Zografidis A."/>
            <person name="Kapolas G."/>
            <person name="Podia V."/>
            <person name="Beri D."/>
            <person name="Papadopoulou K."/>
            <person name="Milioni D."/>
            <person name="Haralampidis K."/>
        </authorList>
    </citation>
    <scope>FUNCTION</scope>
    <scope>INTERACTION WITH BOP1 AND WDR12</scope>
    <scope>SUBCELLULAR LOCATION</scope>
</reference>
<reference key="6">
    <citation type="journal article" date="2015" name="J. Exp. Bot.">
        <title>The nucleolar GTPase nucleostemin-like 1 plays a role in plant growth and senescence by modulating ribosome biogenesis.</title>
        <authorList>
            <person name="Jeon Y."/>
            <person name="Park Y.J."/>
            <person name="Cho H.K."/>
            <person name="Jung H.J."/>
            <person name="Ahn T.K."/>
            <person name="Kang H."/>
            <person name="Pai H.S."/>
        </authorList>
    </citation>
    <scope>INTERACTION WITH NSN1</scope>
    <scope>SUBCELLULAR LOCATION</scope>
</reference>
<keyword id="KW-0539">Nucleus</keyword>
<keyword id="KW-1185">Reference proteome</keyword>
<keyword id="KW-0690">Ribosome biogenesis</keyword>
<keyword id="KW-0698">rRNA processing</keyword>
<accession>Q9LYK7</accession>
<organism>
    <name type="scientific">Arabidopsis thaliana</name>
    <name type="common">Mouse-ear cress</name>
    <dbReference type="NCBI Taxonomy" id="3702"/>
    <lineage>
        <taxon>Eukaryota</taxon>
        <taxon>Viridiplantae</taxon>
        <taxon>Streptophyta</taxon>
        <taxon>Embryophyta</taxon>
        <taxon>Tracheophyta</taxon>
        <taxon>Spermatophyta</taxon>
        <taxon>Magnoliopsida</taxon>
        <taxon>eudicotyledons</taxon>
        <taxon>Gunneridae</taxon>
        <taxon>Pentapetalae</taxon>
        <taxon>rosids</taxon>
        <taxon>malvids</taxon>
        <taxon>Brassicales</taxon>
        <taxon>Brassicaceae</taxon>
        <taxon>Camelineae</taxon>
        <taxon>Arabidopsis</taxon>
    </lineage>
</organism>